<comment type="function">
    <text evidence="1">May regulate endocytosis by recruiting RSP5 ubiquitin ligase activity to specific plasma membrane proteins in response to extracellular stimuli.</text>
</comment>
<comment type="subcellular location">
    <subcellularLocation>
        <location evidence="1">Cytoplasm</location>
    </subcellularLocation>
</comment>
<comment type="similarity">
    <text evidence="2">Belongs to the ART10 family.</text>
</comment>
<accession>C5DL84</accession>
<feature type="chain" id="PRO_0000402193" description="Arrestin-related trafficking adapter 10">
    <location>
        <begin position="1"/>
        <end position="429"/>
    </location>
</feature>
<keyword id="KW-0963">Cytoplasm</keyword>
<keyword id="KW-0254">Endocytosis</keyword>
<keyword id="KW-1185">Reference proteome</keyword>
<evidence type="ECO:0000250" key="1"/>
<evidence type="ECO:0000305" key="2"/>
<sequence length="429" mass="49654">MSTTVRVVLDPPSNGEFYTLEDVIAGSVVLGLEKSVNIREVMVKLVGQSEAVVRPGDHLENEKPQSLQVPLSDNRSLHEVVKLESSVFPPENVKAAMKGSRKPFKVEKGEYKFPFEFHFPSRPQCIQRHQRKLFTYLKGRTNPKLPPSFNNLLSSKDVLNLNAYFYSLGCIEYFVEATVFTGGDEMWFKPFRSYPALKRTFEFIPSNVAQEHLEDALRENPNTPPQVFRSKFDVTFEGSEQQMWVEVRSKHLRSVYRLDYLFRPSGKKFNQVFLCMLNPLPESADLRVARVELNLIEVVTYLAGNRSNANLSSLRLAGVDTDYKVDLTKCQQTESGFTECHVELSDIYPLDMIRFNEEDYKHNGNRLYSFDSCNIRRRFKFQLFLHWTLNGVDHFQTEVLTNFTNIFCESVTVAEQPPDYMEEQLPKYE</sequence>
<name>ART10_LACTC</name>
<reference key="1">
    <citation type="journal article" date="2009" name="Genome Res.">
        <title>Comparative genomics of protoploid Saccharomycetaceae.</title>
        <authorList>
            <consortium name="The Genolevures Consortium"/>
            <person name="Souciet J.-L."/>
            <person name="Dujon B."/>
            <person name="Gaillardin C."/>
            <person name="Johnston M."/>
            <person name="Baret P.V."/>
            <person name="Cliften P."/>
            <person name="Sherman D.J."/>
            <person name="Weissenbach J."/>
            <person name="Westhof E."/>
            <person name="Wincker P."/>
            <person name="Jubin C."/>
            <person name="Poulain J."/>
            <person name="Barbe V."/>
            <person name="Segurens B."/>
            <person name="Artiguenave F."/>
            <person name="Anthouard V."/>
            <person name="Vacherie B."/>
            <person name="Val M.-E."/>
            <person name="Fulton R.S."/>
            <person name="Minx P."/>
            <person name="Wilson R."/>
            <person name="Durrens P."/>
            <person name="Jean G."/>
            <person name="Marck C."/>
            <person name="Martin T."/>
            <person name="Nikolski M."/>
            <person name="Rolland T."/>
            <person name="Seret M.-L."/>
            <person name="Casaregola S."/>
            <person name="Despons L."/>
            <person name="Fairhead C."/>
            <person name="Fischer G."/>
            <person name="Lafontaine I."/>
            <person name="Leh V."/>
            <person name="Lemaire M."/>
            <person name="de Montigny J."/>
            <person name="Neuveglise C."/>
            <person name="Thierry A."/>
            <person name="Blanc-Lenfle I."/>
            <person name="Bleykasten C."/>
            <person name="Diffels J."/>
            <person name="Fritsch E."/>
            <person name="Frangeul L."/>
            <person name="Goeffon A."/>
            <person name="Jauniaux N."/>
            <person name="Kachouri-Lafond R."/>
            <person name="Payen C."/>
            <person name="Potier S."/>
            <person name="Pribylova L."/>
            <person name="Ozanne C."/>
            <person name="Richard G.-F."/>
            <person name="Sacerdot C."/>
            <person name="Straub M.-L."/>
            <person name="Talla E."/>
        </authorList>
    </citation>
    <scope>NUCLEOTIDE SEQUENCE [LARGE SCALE GENOMIC DNA]</scope>
    <source>
        <strain>ATCC 56472 / CBS 6340 / NRRL Y-8284</strain>
    </source>
</reference>
<protein>
    <recommendedName>
        <fullName>Arrestin-related trafficking adapter 10</fullName>
    </recommendedName>
</protein>
<dbReference type="EMBL" id="CU928170">
    <property type="protein sequence ID" value="CAR24235.1"/>
    <property type="molecule type" value="Genomic_DNA"/>
</dbReference>
<dbReference type="RefSeq" id="XP_002554672.1">
    <property type="nucleotide sequence ID" value="XM_002554626.1"/>
</dbReference>
<dbReference type="FunCoup" id="C5DL84">
    <property type="interactions" value="52"/>
</dbReference>
<dbReference type="STRING" id="559295.C5DL84"/>
<dbReference type="GeneID" id="8292884"/>
<dbReference type="KEGG" id="lth:KLTH0F10824g"/>
<dbReference type="eggNOG" id="ENOG502QWIY">
    <property type="taxonomic scope" value="Eukaryota"/>
</dbReference>
<dbReference type="HOGENOM" id="CLU_540776_0_0_1"/>
<dbReference type="InParanoid" id="C5DL84"/>
<dbReference type="OMA" id="YSFKTCT"/>
<dbReference type="OrthoDB" id="3365616at2759"/>
<dbReference type="Proteomes" id="UP000002036">
    <property type="component" value="Chromosome F"/>
</dbReference>
<dbReference type="GO" id="GO:0005829">
    <property type="term" value="C:cytosol"/>
    <property type="evidence" value="ECO:0007669"/>
    <property type="project" value="TreeGrafter"/>
</dbReference>
<dbReference type="GO" id="GO:0030674">
    <property type="term" value="F:protein-macromolecule adaptor activity"/>
    <property type="evidence" value="ECO:0007669"/>
    <property type="project" value="TreeGrafter"/>
</dbReference>
<dbReference type="GO" id="GO:0031625">
    <property type="term" value="F:ubiquitin protein ligase binding"/>
    <property type="evidence" value="ECO:0007669"/>
    <property type="project" value="TreeGrafter"/>
</dbReference>
<dbReference type="GO" id="GO:0070086">
    <property type="term" value="P:ubiquitin-dependent endocytosis"/>
    <property type="evidence" value="ECO:0007669"/>
    <property type="project" value="TreeGrafter"/>
</dbReference>
<dbReference type="CDD" id="cd22952">
    <property type="entry name" value="ART10-like"/>
    <property type="match status" value="1"/>
</dbReference>
<dbReference type="Gene3D" id="2.60.40.640">
    <property type="match status" value="1"/>
</dbReference>
<dbReference type="InterPro" id="IPR014752">
    <property type="entry name" value="Arrestin-like_C"/>
</dbReference>
<dbReference type="InterPro" id="IPR011021">
    <property type="entry name" value="Arrestin-like_N"/>
</dbReference>
<dbReference type="InterPro" id="IPR050357">
    <property type="entry name" value="Arrestin_domain-protein"/>
</dbReference>
<dbReference type="InterPro" id="IPR014756">
    <property type="entry name" value="Ig_E-set"/>
</dbReference>
<dbReference type="PANTHER" id="PTHR11188">
    <property type="entry name" value="ARRESTIN DOMAIN CONTAINING PROTEIN"/>
    <property type="match status" value="1"/>
</dbReference>
<dbReference type="PANTHER" id="PTHR11188:SF174">
    <property type="entry name" value="ARRESTIN-RELATED TRAFFICKING ADAPTER 10-RELATED"/>
    <property type="match status" value="1"/>
</dbReference>
<dbReference type="Pfam" id="PF00339">
    <property type="entry name" value="Arrestin_N"/>
    <property type="match status" value="1"/>
</dbReference>
<dbReference type="SUPFAM" id="SSF81296">
    <property type="entry name" value="E set domains"/>
    <property type="match status" value="1"/>
</dbReference>
<gene>
    <name type="primary">ART10</name>
    <name type="ordered locus">KLTH0F10824g</name>
</gene>
<proteinExistence type="inferred from homology"/>
<organism>
    <name type="scientific">Lachancea thermotolerans (strain ATCC 56472 / CBS 6340 / NRRL Y-8284)</name>
    <name type="common">Yeast</name>
    <name type="synonym">Kluyveromyces thermotolerans</name>
    <dbReference type="NCBI Taxonomy" id="559295"/>
    <lineage>
        <taxon>Eukaryota</taxon>
        <taxon>Fungi</taxon>
        <taxon>Dikarya</taxon>
        <taxon>Ascomycota</taxon>
        <taxon>Saccharomycotina</taxon>
        <taxon>Saccharomycetes</taxon>
        <taxon>Saccharomycetales</taxon>
        <taxon>Saccharomycetaceae</taxon>
        <taxon>Lachancea</taxon>
    </lineage>
</organism>